<accession>P0C1N7</accession>
<sequence length="64" mass="7170">MSKLGVLLTICLLLFPLTALPLDGDQPADQAAERMQAEQHPLFDQKRRCCKFPCPDSCRYLCCG</sequence>
<proteinExistence type="evidence at protein level"/>
<reference key="1">
    <citation type="journal article" date="2005" name="Biochemistry">
        <title>Definition of the M-conotoxin superfamily: characterization of novel peptides from molluscivorous Conus venoms.</title>
        <authorList>
            <person name="Corpuz G.P."/>
            <person name="Jacobsen R.B."/>
            <person name="Jimenez E.C."/>
            <person name="Watkins M."/>
            <person name="Walker C."/>
            <person name="Colledge C."/>
            <person name="Garrett J.E."/>
            <person name="McDougal O."/>
            <person name="Li W."/>
            <person name="Gray W.R."/>
            <person name="Hillyard D.R."/>
            <person name="Rivier J."/>
            <person name="McIntosh J.M."/>
            <person name="Cruz L.J."/>
            <person name="Olivera B.M."/>
        </authorList>
    </citation>
    <scope>NUCLEOTIDE SEQUENCE [MRNA]</scope>
    <source>
        <tissue>Venom duct</tissue>
    </source>
</reference>
<reference key="2">
    <citation type="journal article" date="2009" name="Proc. Natl. Acad. Sci. U.S.A.">
        <title>Rapid sensitive analysis of cysteine rich peptide venom components.</title>
        <authorList>
            <person name="Ueberheide B.M."/>
            <person name="Fenyo D."/>
            <person name="Alewood P.F."/>
            <person name="Chait B.T."/>
        </authorList>
    </citation>
    <scope>PROTEIN SEQUENCE OF 48-64</scope>
    <scope>SUBCELLULAR LOCATION</scope>
    <scope>MASS SPECTROMETRY</scope>
    <scope>DISULFIDE BONDS</scope>
    <scope>AMIDATION AT CYS-63</scope>
    <source>
        <tissue>Venom</tissue>
    </source>
</reference>
<reference key="3">
    <citation type="journal article" date="2012" name="J. Proteome Res.">
        <title>Constrained de novo sequencing of conotoxins.</title>
        <authorList>
            <person name="Bhatia S."/>
            <person name="Kil Y.J."/>
            <person name="Ueberheide B."/>
            <person name="Chait B.T."/>
            <person name="Tayo L."/>
            <person name="Cruz L."/>
            <person name="Lu B."/>
            <person name="Yates J.R. III"/>
            <person name="Bern M."/>
        </authorList>
    </citation>
    <scope>IDENTIFICATION BY MASS SPECTROMETRY</scope>
    <scope>SUBCELLULAR LOCATION</scope>
    <scope>AMIDATION AT CYS-63</scope>
    <source>
        <tissue>Venom</tissue>
    </source>
</reference>
<reference key="4">
    <citation type="journal article" date="2012" name="Toxicon">
        <title>Secretion and maturation of conotoxins in the venom ducts of Conus textile.</title>
        <authorList>
            <person name="Dobson R."/>
            <person name="Collodoro M."/>
            <person name="Gilles N."/>
            <person name="Turtoi A."/>
            <person name="De Pauw E."/>
            <person name="Quinton L."/>
        </authorList>
    </citation>
    <scope>IDENTIFICATION BY MASS SPECTROMETRY</scope>
    <scope>TISSUE SPECIFICITY</scope>
    <scope>POSITION IN VENOM DUCT</scope>
    <scope>AMIDATION AT CYS-63</scope>
    <source>
        <tissue>Venom</tissue>
    </source>
</reference>
<organism>
    <name type="scientific">Conus textile</name>
    <name type="common">Cloth-of-gold cone</name>
    <dbReference type="NCBI Taxonomy" id="6494"/>
    <lineage>
        <taxon>Eukaryota</taxon>
        <taxon>Metazoa</taxon>
        <taxon>Spiralia</taxon>
        <taxon>Lophotrochozoa</taxon>
        <taxon>Mollusca</taxon>
        <taxon>Gastropoda</taxon>
        <taxon>Caenogastropoda</taxon>
        <taxon>Neogastropoda</taxon>
        <taxon>Conoidea</taxon>
        <taxon>Conidae</taxon>
        <taxon>Conus</taxon>
        <taxon>Cylinder</taxon>
    </lineage>
</organism>
<dbReference type="ConoServer" id="1467">
    <property type="toxin name" value="Tx3f precursor"/>
</dbReference>
<dbReference type="GO" id="GO:0005576">
    <property type="term" value="C:extracellular region"/>
    <property type="evidence" value="ECO:0007669"/>
    <property type="project" value="UniProtKB-SubCell"/>
</dbReference>
<dbReference type="GO" id="GO:0008200">
    <property type="term" value="F:ion channel inhibitor activity"/>
    <property type="evidence" value="ECO:0007669"/>
    <property type="project" value="InterPro"/>
</dbReference>
<dbReference type="GO" id="GO:0090729">
    <property type="term" value="F:toxin activity"/>
    <property type="evidence" value="ECO:0007669"/>
    <property type="project" value="UniProtKB-KW"/>
</dbReference>
<dbReference type="InterPro" id="IPR004214">
    <property type="entry name" value="Conotoxin"/>
</dbReference>
<dbReference type="Pfam" id="PF02950">
    <property type="entry name" value="Conotoxin"/>
    <property type="match status" value="1"/>
</dbReference>
<name>M3F_CONTE</name>
<evidence type="ECO:0000250" key="1"/>
<evidence type="ECO:0000255" key="2"/>
<evidence type="ECO:0000269" key="3">
    <source>
    </source>
</evidence>
<evidence type="ECO:0000269" key="4">
    <source>
    </source>
</evidence>
<evidence type="ECO:0000303" key="5">
    <source>
    </source>
</evidence>
<evidence type="ECO:0000305" key="6"/>
<evidence type="ECO:0000305" key="7">
    <source>
    </source>
</evidence>
<evidence type="ECO:0000305" key="8">
    <source>
    </source>
</evidence>
<evidence type="ECO:0000305" key="9">
    <source>
    </source>
</evidence>
<keyword id="KW-0027">Amidation</keyword>
<keyword id="KW-0165">Cleavage on pair of basic residues</keyword>
<keyword id="KW-0903">Direct protein sequencing</keyword>
<keyword id="KW-1015">Disulfide bond</keyword>
<keyword id="KW-0964">Secreted</keyword>
<keyword id="KW-0732">Signal</keyword>
<keyword id="KW-0800">Toxin</keyword>
<protein>
    <recommendedName>
        <fullName evidence="5">Conotoxin Tx3.5-a</fullName>
    </recommendedName>
    <component>
        <recommendedName>
            <fullName evidence="6">Conotoxin tx3f</fullName>
        </recommendedName>
        <alternativeName>
            <fullName evidence="5">Conotoxin Tx3.5-b</fullName>
        </alternativeName>
    </component>
    <component>
        <recommendedName>
            <fullName evidence="8">Truncated conotoxin tx3f</fullName>
        </recommendedName>
    </component>
</protein>
<feature type="signal peptide" evidence="2">
    <location>
        <begin position="1"/>
        <end position="19"/>
    </location>
</feature>
<feature type="propeptide" id="PRO_0000246051" evidence="3">
    <location>
        <begin position="20"/>
        <end position="47"/>
    </location>
</feature>
<feature type="peptide" id="PRO_0000371306" description="Conotoxin Tx3.5-a" evidence="3">
    <location>
        <begin position="48"/>
        <end position="64"/>
    </location>
</feature>
<feature type="peptide" id="PRO_0000246052" description="Conotoxin tx3f" evidence="3 4">
    <location>
        <begin position="48"/>
        <end position="63"/>
    </location>
</feature>
<feature type="peptide" id="PRO_0000445118" description="Truncated conotoxin tx3f" evidence="4">
    <location>
        <begin position="49"/>
        <end position="63"/>
    </location>
</feature>
<feature type="modified residue" description="Cysteine amide" evidence="3 4">
    <location>
        <position position="63"/>
    </location>
</feature>
<feature type="disulfide bond" evidence="1">
    <location>
        <begin position="49"/>
        <end position="58"/>
    </location>
</feature>
<feature type="disulfide bond" evidence="1">
    <location>
        <begin position="50"/>
        <end position="62"/>
    </location>
</feature>
<feature type="disulfide bond" evidence="1">
    <location>
        <begin position="54"/>
        <end position="63"/>
    </location>
</feature>
<comment type="subcellular location">
    <subcellularLocation>
        <location evidence="1">Secreted</location>
    </subcellularLocation>
</comment>
<comment type="tissue specificity">
    <text evidence="7 9">Expressed by the venom duct. Is present in all duct parts with a highest content in part 2 (proximal of the venom bulb) and then decreases in concentration toward the end of the duct.</text>
</comment>
<comment type="domain">
    <text>The cysteine framework is III (CC-C-C-CC). Classified in the M-3 branch, since 3 residues stand between the fourth and the fifth cysteine residues.</text>
</comment>
<comment type="PTM">
    <text>Contains 3 disulfide bonds.</text>
</comment>
<comment type="PTM">
    <text evidence="3">Two peptides are produced from this precursor. Conotoxin Tx3.5-b is amidated at Cys-63, conotoxin Tx3.5-a has an unmodified C-terminus.</text>
</comment>
<comment type="mass spectrometry" mass="1888.707" error="0.02" method="Electrospray" evidence="3">
    <molecule>Conotoxin tx3f</molecule>
    <text>With amidation at Cys-63.</text>
</comment>
<comment type="mass spectrometry" mass="1946.706" error="0.02" method="Electrospray" evidence="3">
    <molecule>Conotoxin Tx3.5-a</molecule>
</comment>
<comment type="similarity">
    <text evidence="6">Belongs to the conotoxin M superfamily.</text>
</comment>